<evidence type="ECO:0000250" key="1">
    <source>
        <dbReference type="UniProtKB" id="Q50EL0"/>
    </source>
</evidence>
<evidence type="ECO:0000269" key="2">
    <source>
    </source>
</evidence>
<evidence type="ECO:0000303" key="3">
    <source>
    </source>
</evidence>
<evidence type="ECO:0000305" key="4"/>
<evidence type="ECO:0000305" key="5">
    <source>
    </source>
</evidence>
<comment type="function">
    <text evidence="2 5">Indole diterpene prenyltransferase; part of the gene cluster that mediates the biosynthesis of the indole diterpenes janthitremanes such as shearinine K or shearinine A (PubMed:26213965). The geranylgeranyl diphosphate (GGPP) synthase janG catalyzes the first step in janthitremane biosynthesis via conversion of farnesyl pyrophosphate and isopentyl pyrophosphate into geranylgeranyl pyrophosphate (GGPP) (PubMed:26213965). Condensation of indole-3-glycerol phosphate with GGPP by the prenyl transferase janC then forms 3-geranylgeranylindole (3-GGI) (PubMed:26213965). Epoxidation by the FAD-dependent monooxygenase janM leads to a epoxidized-GGI that is substrate of the terpene cyclase janB for cyclization to yield paspaline (PubMed:26213965). Paspaline is subsequently converted to 13-desoxypaspaline by the cytochrome P450 monooxygenase janP, via beta-PC-M6 in a series of alpha-face oxidations (Probable). The cytochrome P450 monooxygenase janQ is proposed to carry out sequential beta-face oxidation steps at C-7 and C-13 of 13-desoxypaspaline to form paspalicine and paspalinine respectively (Probable). The indole diterpene prenyltransferase janD may then convert paspalinine into shearinine K which is substrate of janO and/or additional enzymes for oxidation and cyclization to generate shearinine A (Probable).</text>
</comment>
<comment type="pathway">
    <text evidence="2">Secondary metabolite biosynthesis.</text>
</comment>
<comment type="disruption phenotype">
    <text evidence="2">Abolishes the production of the janthitremanes shearinine A, F or K but accumulates 13-desoxypaxilline.</text>
</comment>
<comment type="similarity">
    <text evidence="4">Belongs to the tryptophan dimethylallyltransferase family.</text>
</comment>
<name>JAND_PENJA</name>
<accession>A0A0E3D8M5</accession>
<gene>
    <name evidence="3" type="primary">janD</name>
</gene>
<organism>
    <name type="scientific">Penicillium janthinellum</name>
    <name type="common">Penicillium vitale</name>
    <dbReference type="NCBI Taxonomy" id="5079"/>
    <lineage>
        <taxon>Eukaryota</taxon>
        <taxon>Fungi</taxon>
        <taxon>Dikarya</taxon>
        <taxon>Ascomycota</taxon>
        <taxon>Pezizomycotina</taxon>
        <taxon>Eurotiomycetes</taxon>
        <taxon>Eurotiomycetidae</taxon>
        <taxon>Eurotiales</taxon>
        <taxon>Aspergillaceae</taxon>
        <taxon>Penicillium</taxon>
    </lineage>
</organism>
<proteinExistence type="inferred from homology"/>
<sequence>MGSHEVELRPWQSLAAGLGFSSPDEEYWWTAFAQPLNQLMEWADYSIAEQYRVLAFLHRYVIPTCGPKPYRNGEQYWKTFMGFDHTPIQVSINFYNSKATVRTANIPICALSGSALDPINQKATADTLKAQKHLAPGNDLRWFEHFAKAFFLPNDEAHLINAKVSDRVLAMQGVQGMLSYDFPPNRTQTKVAMSPIWKHIETGRPIGDLMIQSIKDLGDEATGYMQSLQVLEEFIESEAAKDAGVSPAFFAFDTNLSENYKSSRIKIYLATPRTAFNRMVDIFTLGGRLNGPEMDRATQALRLLWSSVINVPEGLLDNDDIVPKNPHRCACVIFNFEIWPGASVPTPKIYLPAAYYGKPDLEIAEGMDVFFKSQGWNQPFHSYTDNYAKAFLRDQKVTCRHHDISFSYKGEGAYVTAYYKPELDAFADAATWVPEIYK</sequence>
<dbReference type="EC" id="2.5.1.-" evidence="2"/>
<dbReference type="EMBL" id="KF280651">
    <property type="protein sequence ID" value="AGZ20478.1"/>
    <property type="molecule type" value="Genomic_DNA"/>
</dbReference>
<dbReference type="SMR" id="A0A0E3D8M5"/>
<dbReference type="GO" id="GO:0016765">
    <property type="term" value="F:transferase activity, transferring alkyl or aryl (other than methyl) groups"/>
    <property type="evidence" value="ECO:0007669"/>
    <property type="project" value="InterPro"/>
</dbReference>
<dbReference type="GO" id="GO:0009820">
    <property type="term" value="P:alkaloid metabolic process"/>
    <property type="evidence" value="ECO:0007669"/>
    <property type="project" value="InterPro"/>
</dbReference>
<dbReference type="CDD" id="cd13929">
    <property type="entry name" value="PT-DMATS_CymD"/>
    <property type="match status" value="1"/>
</dbReference>
<dbReference type="InterPro" id="IPR017795">
    <property type="entry name" value="Aro_prenylTrfase_DMATS"/>
</dbReference>
<dbReference type="InterPro" id="IPR012148">
    <property type="entry name" value="DMATS-type_fun"/>
</dbReference>
<dbReference type="NCBIfam" id="TIGR03429">
    <property type="entry name" value="arom_pren_DMATS"/>
    <property type="match status" value="1"/>
</dbReference>
<dbReference type="PANTHER" id="PTHR40627">
    <property type="entry name" value="INDOLE PRENYLTRANSFERASE TDIB-RELATED"/>
    <property type="match status" value="1"/>
</dbReference>
<dbReference type="PANTHER" id="PTHR40627:SF4">
    <property type="entry name" value="PRENYLTRANSFERASE ASQH1-RELATED"/>
    <property type="match status" value="1"/>
</dbReference>
<dbReference type="Pfam" id="PF11991">
    <property type="entry name" value="Trp_DMAT"/>
    <property type="match status" value="1"/>
</dbReference>
<dbReference type="PIRSF" id="PIRSF000509">
    <property type="entry name" value="Trp_DMAT"/>
    <property type="match status" value="1"/>
</dbReference>
<protein>
    <recommendedName>
        <fullName evidence="3">Indole diterpene prenyltransferase janD</fullName>
        <ecNumber evidence="2">2.5.1.-</ecNumber>
    </recommendedName>
    <alternativeName>
        <fullName evidence="3">Penitrem biosynthesis cluster protein D</fullName>
    </alternativeName>
</protein>
<reference key="1">
    <citation type="journal article" date="2015" name="Toxins">
        <title>Molecular cloning and functional analysis of gene clusters for the biosynthesis of indole-diterpenes in Penicillium crustosum and P. janthinellum.</title>
        <authorList>
            <person name="Nicholson M.J."/>
            <person name="Eaton C.J."/>
            <person name="Starkel C."/>
            <person name="Tapper B.A."/>
            <person name="Cox M.P."/>
            <person name="Scott B."/>
        </authorList>
    </citation>
    <scope>NUCLEOTIDE SEQUENCE [GENOMIC DNA]</scope>
    <scope>IDENTIFICATION</scope>
    <scope>FUNCTION</scope>
    <scope>DISRUPTION PHENOTYPE</scope>
    <scope>PATHWAY</scope>
    <source>
        <strain>PN2408</strain>
    </source>
</reference>
<keyword id="KW-0808">Transferase</keyword>
<feature type="chain" id="PRO_0000446557" description="Indole diterpene prenyltransferase janD">
    <location>
        <begin position="1"/>
        <end position="438"/>
    </location>
</feature>
<feature type="binding site" evidence="1">
    <location>
        <begin position="80"/>
        <end position="81"/>
    </location>
    <ligand>
        <name>L-tryptophan</name>
        <dbReference type="ChEBI" id="CHEBI:57912"/>
    </ligand>
</feature>
<feature type="binding site" evidence="1">
    <location>
        <position position="102"/>
    </location>
    <ligand>
        <name>substrate</name>
    </ligand>
</feature>
<feature type="binding site" evidence="1">
    <location>
        <position position="190"/>
    </location>
    <ligand>
        <name>substrate</name>
    </ligand>
</feature>
<feature type="binding site" evidence="1">
    <location>
        <position position="264"/>
    </location>
    <ligand>
        <name>substrate</name>
    </ligand>
</feature>
<feature type="binding site" evidence="1">
    <location>
        <position position="266"/>
    </location>
    <ligand>
        <name>substrate</name>
    </ligand>
</feature>
<feature type="binding site" evidence="1">
    <location>
        <position position="268"/>
    </location>
    <ligand>
        <name>substrate</name>
    </ligand>
</feature>
<feature type="binding site" evidence="1">
    <location>
        <position position="350"/>
    </location>
    <ligand>
        <name>substrate</name>
    </ligand>
</feature>
<feature type="binding site" evidence="1">
    <location>
        <position position="414"/>
    </location>
    <ligand>
        <name>substrate</name>
    </ligand>
</feature>
<feature type="binding site" evidence="1">
    <location>
        <position position="418"/>
    </location>
    <ligand>
        <name>substrate</name>
    </ligand>
</feature>